<name>PYRB_BEII9</name>
<gene>
    <name evidence="1" type="primary">pyrB</name>
    <name type="ordered locus">Bind_3418</name>
</gene>
<organism>
    <name type="scientific">Beijerinckia indica subsp. indica (strain ATCC 9039 / DSM 1715 / NCIMB 8712)</name>
    <dbReference type="NCBI Taxonomy" id="395963"/>
    <lineage>
        <taxon>Bacteria</taxon>
        <taxon>Pseudomonadati</taxon>
        <taxon>Pseudomonadota</taxon>
        <taxon>Alphaproteobacteria</taxon>
        <taxon>Hyphomicrobiales</taxon>
        <taxon>Beijerinckiaceae</taxon>
        <taxon>Beijerinckia</taxon>
    </lineage>
</organism>
<dbReference type="EC" id="2.1.3.2" evidence="1"/>
<dbReference type="EMBL" id="CP001016">
    <property type="protein sequence ID" value="ACB96975.1"/>
    <property type="molecule type" value="Genomic_DNA"/>
</dbReference>
<dbReference type="RefSeq" id="WP_012386323.1">
    <property type="nucleotide sequence ID" value="NC_010581.1"/>
</dbReference>
<dbReference type="SMR" id="B2IEN5"/>
<dbReference type="STRING" id="395963.Bind_3418"/>
<dbReference type="KEGG" id="bid:Bind_3418"/>
<dbReference type="eggNOG" id="COG0540">
    <property type="taxonomic scope" value="Bacteria"/>
</dbReference>
<dbReference type="HOGENOM" id="CLU_043846_2_0_5"/>
<dbReference type="OrthoDB" id="9774690at2"/>
<dbReference type="UniPathway" id="UPA00070">
    <property type="reaction ID" value="UER00116"/>
</dbReference>
<dbReference type="Proteomes" id="UP000001695">
    <property type="component" value="Chromosome"/>
</dbReference>
<dbReference type="GO" id="GO:0005829">
    <property type="term" value="C:cytosol"/>
    <property type="evidence" value="ECO:0007669"/>
    <property type="project" value="TreeGrafter"/>
</dbReference>
<dbReference type="GO" id="GO:0016597">
    <property type="term" value="F:amino acid binding"/>
    <property type="evidence" value="ECO:0007669"/>
    <property type="project" value="InterPro"/>
</dbReference>
<dbReference type="GO" id="GO:0004070">
    <property type="term" value="F:aspartate carbamoyltransferase activity"/>
    <property type="evidence" value="ECO:0007669"/>
    <property type="project" value="UniProtKB-UniRule"/>
</dbReference>
<dbReference type="GO" id="GO:0006207">
    <property type="term" value="P:'de novo' pyrimidine nucleobase biosynthetic process"/>
    <property type="evidence" value="ECO:0007669"/>
    <property type="project" value="InterPro"/>
</dbReference>
<dbReference type="GO" id="GO:0044205">
    <property type="term" value="P:'de novo' UMP biosynthetic process"/>
    <property type="evidence" value="ECO:0007669"/>
    <property type="project" value="UniProtKB-UniRule"/>
</dbReference>
<dbReference type="GO" id="GO:0006520">
    <property type="term" value="P:amino acid metabolic process"/>
    <property type="evidence" value="ECO:0007669"/>
    <property type="project" value="InterPro"/>
</dbReference>
<dbReference type="FunFam" id="3.40.50.1370:FF:000007">
    <property type="entry name" value="Aspartate carbamoyltransferase"/>
    <property type="match status" value="1"/>
</dbReference>
<dbReference type="Gene3D" id="3.40.50.1370">
    <property type="entry name" value="Aspartate/ornithine carbamoyltransferase"/>
    <property type="match status" value="2"/>
</dbReference>
<dbReference type="HAMAP" id="MF_00001">
    <property type="entry name" value="Asp_carb_tr"/>
    <property type="match status" value="1"/>
</dbReference>
<dbReference type="InterPro" id="IPR006132">
    <property type="entry name" value="Asp/Orn_carbamoyltranf_P-bd"/>
</dbReference>
<dbReference type="InterPro" id="IPR006130">
    <property type="entry name" value="Asp/Orn_carbamoylTrfase"/>
</dbReference>
<dbReference type="InterPro" id="IPR036901">
    <property type="entry name" value="Asp/Orn_carbamoylTrfase_sf"/>
</dbReference>
<dbReference type="InterPro" id="IPR002082">
    <property type="entry name" value="Asp_carbamoyltransf"/>
</dbReference>
<dbReference type="InterPro" id="IPR006131">
    <property type="entry name" value="Asp_carbamoyltransf_Asp/Orn-bd"/>
</dbReference>
<dbReference type="NCBIfam" id="TIGR00670">
    <property type="entry name" value="asp_carb_tr"/>
    <property type="match status" value="1"/>
</dbReference>
<dbReference type="NCBIfam" id="NF002032">
    <property type="entry name" value="PRK00856.1"/>
    <property type="match status" value="1"/>
</dbReference>
<dbReference type="PANTHER" id="PTHR45753:SF6">
    <property type="entry name" value="ASPARTATE CARBAMOYLTRANSFERASE"/>
    <property type="match status" value="1"/>
</dbReference>
<dbReference type="PANTHER" id="PTHR45753">
    <property type="entry name" value="ORNITHINE CARBAMOYLTRANSFERASE, MITOCHONDRIAL"/>
    <property type="match status" value="1"/>
</dbReference>
<dbReference type="Pfam" id="PF00185">
    <property type="entry name" value="OTCace"/>
    <property type="match status" value="1"/>
</dbReference>
<dbReference type="Pfam" id="PF02729">
    <property type="entry name" value="OTCace_N"/>
    <property type="match status" value="1"/>
</dbReference>
<dbReference type="PRINTS" id="PR00100">
    <property type="entry name" value="AOTCASE"/>
</dbReference>
<dbReference type="PRINTS" id="PR00101">
    <property type="entry name" value="ATCASE"/>
</dbReference>
<dbReference type="SUPFAM" id="SSF53671">
    <property type="entry name" value="Aspartate/ornithine carbamoyltransferase"/>
    <property type="match status" value="1"/>
</dbReference>
<dbReference type="PROSITE" id="PS00097">
    <property type="entry name" value="CARBAMOYLTRANSFERASE"/>
    <property type="match status" value="1"/>
</dbReference>
<keyword id="KW-0665">Pyrimidine biosynthesis</keyword>
<keyword id="KW-1185">Reference proteome</keyword>
<keyword id="KW-0808">Transferase</keyword>
<feature type="chain" id="PRO_1000088738" description="Aspartate carbamoyltransferase catalytic subunit">
    <location>
        <begin position="1"/>
        <end position="317"/>
    </location>
</feature>
<feature type="binding site" evidence="1">
    <location>
        <position position="66"/>
    </location>
    <ligand>
        <name>carbamoyl phosphate</name>
        <dbReference type="ChEBI" id="CHEBI:58228"/>
    </ligand>
</feature>
<feature type="binding site" evidence="1">
    <location>
        <position position="67"/>
    </location>
    <ligand>
        <name>carbamoyl phosphate</name>
        <dbReference type="ChEBI" id="CHEBI:58228"/>
    </ligand>
</feature>
<feature type="binding site" evidence="1">
    <location>
        <position position="94"/>
    </location>
    <ligand>
        <name>L-aspartate</name>
        <dbReference type="ChEBI" id="CHEBI:29991"/>
    </ligand>
</feature>
<feature type="binding site" evidence="1">
    <location>
        <position position="116"/>
    </location>
    <ligand>
        <name>carbamoyl phosphate</name>
        <dbReference type="ChEBI" id="CHEBI:58228"/>
    </ligand>
</feature>
<feature type="binding site" evidence="1">
    <location>
        <position position="144"/>
    </location>
    <ligand>
        <name>carbamoyl phosphate</name>
        <dbReference type="ChEBI" id="CHEBI:58228"/>
    </ligand>
</feature>
<feature type="binding site" evidence="1">
    <location>
        <position position="147"/>
    </location>
    <ligand>
        <name>carbamoyl phosphate</name>
        <dbReference type="ChEBI" id="CHEBI:58228"/>
    </ligand>
</feature>
<feature type="binding site" evidence="1">
    <location>
        <position position="177"/>
    </location>
    <ligand>
        <name>L-aspartate</name>
        <dbReference type="ChEBI" id="CHEBI:29991"/>
    </ligand>
</feature>
<feature type="binding site" evidence="1">
    <location>
        <position position="231"/>
    </location>
    <ligand>
        <name>L-aspartate</name>
        <dbReference type="ChEBI" id="CHEBI:29991"/>
    </ligand>
</feature>
<feature type="binding site" evidence="1">
    <location>
        <position position="272"/>
    </location>
    <ligand>
        <name>carbamoyl phosphate</name>
        <dbReference type="ChEBI" id="CHEBI:58228"/>
    </ligand>
</feature>
<feature type="binding site" evidence="1">
    <location>
        <position position="273"/>
    </location>
    <ligand>
        <name>carbamoyl phosphate</name>
        <dbReference type="ChEBI" id="CHEBI:58228"/>
    </ligand>
</feature>
<sequence length="317" mass="34596">MFQPLSSKPSFPHRHLLGIAGLSAQDLTILLDLAEEAIEVSRQVEKKRTSLRGRTLINLFFEASTRTQSSFELAGKRLGADVMNMSVATSSVKKGETLLDTAMTLNAMRPDIIVVRHAQAGAVHLLAREVDCSVVNAGDGAHEHPTQALLDALTIRRNKGRIEGLIVAICGDILHSRVARSNILSLSALGARVRVIGPSTLLPTGIEQMGVEVFRDMREGLVGADIVMMLRLQRERMDGGFIPSLKEYFRFYGLDEEKLALARPDALVMHPGPMNRGVEIASRVADGPQSRIREQVEMGVAVRMAVLEALSQHLPNG</sequence>
<reference key="1">
    <citation type="journal article" date="2010" name="J. Bacteriol.">
        <title>Complete genome sequence of Beijerinckia indica subsp. indica.</title>
        <authorList>
            <person name="Tamas I."/>
            <person name="Dedysh S.N."/>
            <person name="Liesack W."/>
            <person name="Stott M.B."/>
            <person name="Alam M."/>
            <person name="Murrell J.C."/>
            <person name="Dunfield P.F."/>
        </authorList>
    </citation>
    <scope>NUCLEOTIDE SEQUENCE [LARGE SCALE GENOMIC DNA]</scope>
    <source>
        <strain>ATCC 9039 / DSM 1715 / NCIMB 8712</strain>
    </source>
</reference>
<accession>B2IEN5</accession>
<protein>
    <recommendedName>
        <fullName evidence="1">Aspartate carbamoyltransferase catalytic subunit</fullName>
        <ecNumber evidence="1">2.1.3.2</ecNumber>
    </recommendedName>
    <alternativeName>
        <fullName evidence="1">Aspartate transcarbamylase</fullName>
        <shortName evidence="1">ATCase</shortName>
    </alternativeName>
</protein>
<evidence type="ECO:0000255" key="1">
    <source>
        <dbReference type="HAMAP-Rule" id="MF_00001"/>
    </source>
</evidence>
<proteinExistence type="inferred from homology"/>
<comment type="function">
    <text evidence="1">Catalyzes the condensation of carbamoyl phosphate and aspartate to form carbamoyl aspartate and inorganic phosphate, the committed step in the de novo pyrimidine nucleotide biosynthesis pathway.</text>
</comment>
<comment type="catalytic activity">
    <reaction evidence="1">
        <text>carbamoyl phosphate + L-aspartate = N-carbamoyl-L-aspartate + phosphate + H(+)</text>
        <dbReference type="Rhea" id="RHEA:20013"/>
        <dbReference type="ChEBI" id="CHEBI:15378"/>
        <dbReference type="ChEBI" id="CHEBI:29991"/>
        <dbReference type="ChEBI" id="CHEBI:32814"/>
        <dbReference type="ChEBI" id="CHEBI:43474"/>
        <dbReference type="ChEBI" id="CHEBI:58228"/>
        <dbReference type="EC" id="2.1.3.2"/>
    </reaction>
</comment>
<comment type="pathway">
    <text evidence="1">Pyrimidine metabolism; UMP biosynthesis via de novo pathway; (S)-dihydroorotate from bicarbonate: step 2/3.</text>
</comment>
<comment type="subunit">
    <text evidence="1">Heterododecamer (2C3:3R2) of six catalytic PyrB chains organized as two trimers (C3), and six regulatory PyrI chains organized as three dimers (R2).</text>
</comment>
<comment type="similarity">
    <text evidence="1">Belongs to the aspartate/ornithine carbamoyltransferase superfamily. ATCase family.</text>
</comment>